<sequence>MSAELSQSPSSSPLFSLSGADIDRAAKRIAPVVTPTPLQPSDRLSAITGATVYLKREDLQTVRSYKLRGAYNLLVQLSDEELAAGVVCSSAGNHAQGFAYACRCLGVHGRVYVPAKTPKQKRDRIRYHGGEFIDLIVGGSTYDLAAAAALEDVERTGATLVPPFDDLRTIAGQGTIAVEVLGQLEDEPDLVVVPVGGGGCIAGITTYLAERTTNTAVLGVEPAGAAAMMAALAAGEPVTLDHVDQFVDGAAVNRAGTLTYAALAAAGDMVSLTTVDEGAVCTAMLDLYQNEGIIAEPAGALSVAGLLEADIEPGSTVVCLISGGNNDVSRYGEVLERSLVHLGLKHYFLVDFPQEPGALRRFLDDVLGPNDDITLFEYVKRNNRETGEALVGIELGSAADLDGLLARMRATDIHVEALEPGSPAYRYLL</sequence>
<protein>
    <recommendedName>
        <fullName>L-threonine dehydratase biosynthetic IlvA</fullName>
        <ecNumber>4.3.1.19</ecNumber>
    </recommendedName>
    <alternativeName>
        <fullName>Threonine deaminase</fullName>
    </alternativeName>
</protein>
<organism>
    <name type="scientific">Mycobacterium tuberculosis (strain CDC 1551 / Oshkosh)</name>
    <dbReference type="NCBI Taxonomy" id="83331"/>
    <lineage>
        <taxon>Bacteria</taxon>
        <taxon>Bacillati</taxon>
        <taxon>Actinomycetota</taxon>
        <taxon>Actinomycetes</taxon>
        <taxon>Mycobacteriales</taxon>
        <taxon>Mycobacteriaceae</taxon>
        <taxon>Mycobacterium</taxon>
        <taxon>Mycobacterium tuberculosis complex</taxon>
    </lineage>
</organism>
<proteinExistence type="inferred from homology"/>
<feature type="chain" id="PRO_0000428401" description="L-threonine dehydratase biosynthetic IlvA">
    <location>
        <begin position="1"/>
        <end position="429"/>
    </location>
</feature>
<feature type="domain" description="ACT-like" evidence="2">
    <location>
        <begin position="346"/>
        <end position="420"/>
    </location>
</feature>
<feature type="binding site" evidence="1">
    <location>
        <position position="93"/>
    </location>
    <ligand>
        <name>pyridoxal 5'-phosphate</name>
        <dbReference type="ChEBI" id="CHEBI:597326"/>
    </ligand>
</feature>
<feature type="binding site" evidence="1">
    <location>
        <begin position="196"/>
        <end position="200"/>
    </location>
    <ligand>
        <name>pyridoxal 5'-phosphate</name>
        <dbReference type="ChEBI" id="CHEBI:597326"/>
    </ligand>
</feature>
<feature type="binding site" evidence="1">
    <location>
        <position position="322"/>
    </location>
    <ligand>
        <name>pyridoxal 5'-phosphate</name>
        <dbReference type="ChEBI" id="CHEBI:597326"/>
    </ligand>
</feature>
<feature type="modified residue" description="N6-(pyridoxal phosphate)lysine" evidence="1">
    <location>
        <position position="66"/>
    </location>
</feature>
<accession>P9WG94</accession>
<accession>L0T9Z2</accession>
<accession>P66897</accession>
<accession>Q10766</accession>
<keyword id="KW-0028">Amino-acid biosynthesis</keyword>
<keyword id="KW-0100">Branched-chain amino acid biosynthesis</keyword>
<keyword id="KW-0412">Isoleucine biosynthesis</keyword>
<keyword id="KW-0456">Lyase</keyword>
<keyword id="KW-0663">Pyridoxal phosphate</keyword>
<keyword id="KW-1185">Reference proteome</keyword>
<name>ILVA_MYCTO</name>
<comment type="function">
    <text evidence="1">Catalyzes the anaerobic formation of alpha-ketobutyrate and ammonia from threonine in a two-step reaction. The first step involved a dehydration of threonine and a production of enamine intermediates (aminocrotonate), which tautomerizes to its imine form (iminobutyrate). Both intermediates are unstable and short-lived. The second step is the nonenzymatic hydrolysis of the enamine/imine intermediates to form 2-ketobutyrate and free ammonia. In the low water environment of the cell, the second step is accelerated by RidA (By similarity).</text>
</comment>
<comment type="catalytic activity">
    <reaction>
        <text>L-threonine = 2-oxobutanoate + NH4(+)</text>
        <dbReference type="Rhea" id="RHEA:22108"/>
        <dbReference type="ChEBI" id="CHEBI:16763"/>
        <dbReference type="ChEBI" id="CHEBI:28938"/>
        <dbReference type="ChEBI" id="CHEBI:57926"/>
        <dbReference type="EC" id="4.3.1.19"/>
    </reaction>
</comment>
<comment type="cofactor">
    <cofactor evidence="1">
        <name>pyridoxal 5'-phosphate</name>
        <dbReference type="ChEBI" id="CHEBI:597326"/>
    </cofactor>
</comment>
<comment type="pathway">
    <text>Amino-acid biosynthesis; L-isoleucine biosynthesis; 2-oxobutanoate from L-threonine: step 1/1.</text>
</comment>
<comment type="subunit">
    <text evidence="1">Homotetramer.</text>
</comment>
<comment type="similarity">
    <text evidence="3">Belongs to the serine/threonine dehydratase family.</text>
</comment>
<dbReference type="EC" id="4.3.1.19"/>
<dbReference type="EMBL" id="AE000516">
    <property type="protein sequence ID" value="AAK45877.1"/>
    <property type="molecule type" value="Genomic_DNA"/>
</dbReference>
<dbReference type="PIR" id="D70763">
    <property type="entry name" value="D70763"/>
</dbReference>
<dbReference type="RefSeq" id="WP_003407781.1">
    <property type="nucleotide sequence ID" value="NZ_KK341227.1"/>
</dbReference>
<dbReference type="SMR" id="P9WG94"/>
<dbReference type="GeneID" id="45425543"/>
<dbReference type="KEGG" id="mtc:MT1610"/>
<dbReference type="PATRIC" id="fig|83331.31.peg.1732"/>
<dbReference type="HOGENOM" id="CLU_021152_4_2_11"/>
<dbReference type="UniPathway" id="UPA00047">
    <property type="reaction ID" value="UER00054"/>
</dbReference>
<dbReference type="Proteomes" id="UP000001020">
    <property type="component" value="Chromosome"/>
</dbReference>
<dbReference type="GO" id="GO:0003941">
    <property type="term" value="F:L-serine ammonia-lyase activity"/>
    <property type="evidence" value="ECO:0007669"/>
    <property type="project" value="TreeGrafter"/>
</dbReference>
<dbReference type="GO" id="GO:0030170">
    <property type="term" value="F:pyridoxal phosphate binding"/>
    <property type="evidence" value="ECO:0007669"/>
    <property type="project" value="InterPro"/>
</dbReference>
<dbReference type="GO" id="GO:0004794">
    <property type="term" value="F:threonine deaminase activity"/>
    <property type="evidence" value="ECO:0007669"/>
    <property type="project" value="UniProtKB-EC"/>
</dbReference>
<dbReference type="GO" id="GO:0009097">
    <property type="term" value="P:isoleucine biosynthetic process"/>
    <property type="evidence" value="ECO:0007669"/>
    <property type="project" value="UniProtKB-UniPathway"/>
</dbReference>
<dbReference type="GO" id="GO:0006565">
    <property type="term" value="P:L-serine catabolic process"/>
    <property type="evidence" value="ECO:0007669"/>
    <property type="project" value="TreeGrafter"/>
</dbReference>
<dbReference type="GO" id="GO:0006567">
    <property type="term" value="P:threonine catabolic process"/>
    <property type="evidence" value="ECO:0007669"/>
    <property type="project" value="TreeGrafter"/>
</dbReference>
<dbReference type="GO" id="GO:0006566">
    <property type="term" value="P:threonine metabolic process"/>
    <property type="evidence" value="ECO:0000250"/>
    <property type="project" value="UniProtKB"/>
</dbReference>
<dbReference type="CDD" id="cd04907">
    <property type="entry name" value="ACT_ThrD-I_2"/>
    <property type="match status" value="1"/>
</dbReference>
<dbReference type="CDD" id="cd01562">
    <property type="entry name" value="Thr-dehyd"/>
    <property type="match status" value="1"/>
</dbReference>
<dbReference type="FunFam" id="3.40.1020.10:FF:000002">
    <property type="entry name" value="L-threonine dehydratase"/>
    <property type="match status" value="1"/>
</dbReference>
<dbReference type="FunFam" id="3.40.50.1100:FF:000005">
    <property type="entry name" value="Threonine dehydratase catabolic"/>
    <property type="match status" value="1"/>
</dbReference>
<dbReference type="Gene3D" id="3.40.50.1100">
    <property type="match status" value="2"/>
</dbReference>
<dbReference type="Gene3D" id="3.40.1020.10">
    <property type="entry name" value="Biosynthetic Threonine Deaminase, Domain 3"/>
    <property type="match status" value="1"/>
</dbReference>
<dbReference type="InterPro" id="IPR011820">
    <property type="entry name" value="IlvA"/>
</dbReference>
<dbReference type="InterPro" id="IPR050147">
    <property type="entry name" value="Ser/Thr_Dehydratase"/>
</dbReference>
<dbReference type="InterPro" id="IPR000634">
    <property type="entry name" value="Ser/Thr_deHydtase_PyrdxlP-BS"/>
</dbReference>
<dbReference type="InterPro" id="IPR001721">
    <property type="entry name" value="TD_ACT-like"/>
</dbReference>
<dbReference type="InterPro" id="IPR038110">
    <property type="entry name" value="TD_ACT-like_sf"/>
</dbReference>
<dbReference type="InterPro" id="IPR001926">
    <property type="entry name" value="TrpB-like_PALP"/>
</dbReference>
<dbReference type="InterPro" id="IPR036052">
    <property type="entry name" value="TrpB-like_PALP_sf"/>
</dbReference>
<dbReference type="NCBIfam" id="NF006390">
    <property type="entry name" value="PRK08639.1"/>
    <property type="match status" value="1"/>
</dbReference>
<dbReference type="NCBIfam" id="TIGR02079">
    <property type="entry name" value="THD1"/>
    <property type="match status" value="1"/>
</dbReference>
<dbReference type="PANTHER" id="PTHR48078:SF11">
    <property type="entry name" value="THREONINE DEHYDRATASE, MITOCHONDRIAL"/>
    <property type="match status" value="1"/>
</dbReference>
<dbReference type="PANTHER" id="PTHR48078">
    <property type="entry name" value="THREONINE DEHYDRATASE, MITOCHONDRIAL-RELATED"/>
    <property type="match status" value="1"/>
</dbReference>
<dbReference type="Pfam" id="PF00291">
    <property type="entry name" value="PALP"/>
    <property type="match status" value="1"/>
</dbReference>
<dbReference type="Pfam" id="PF00585">
    <property type="entry name" value="Thr_dehydrat_C"/>
    <property type="match status" value="1"/>
</dbReference>
<dbReference type="SUPFAM" id="SSF53686">
    <property type="entry name" value="Tryptophan synthase beta subunit-like PLP-dependent enzymes"/>
    <property type="match status" value="1"/>
</dbReference>
<dbReference type="PROSITE" id="PS51672">
    <property type="entry name" value="ACT_LIKE"/>
    <property type="match status" value="1"/>
</dbReference>
<dbReference type="PROSITE" id="PS00165">
    <property type="entry name" value="DEHYDRATASE_SER_THR"/>
    <property type="match status" value="1"/>
</dbReference>
<gene>
    <name type="primary">ilvA</name>
    <name type="ordered locus">MT1610</name>
</gene>
<reference key="1">
    <citation type="journal article" date="2002" name="J. Bacteriol.">
        <title>Whole-genome comparison of Mycobacterium tuberculosis clinical and laboratory strains.</title>
        <authorList>
            <person name="Fleischmann R.D."/>
            <person name="Alland D."/>
            <person name="Eisen J.A."/>
            <person name="Carpenter L."/>
            <person name="White O."/>
            <person name="Peterson J.D."/>
            <person name="DeBoy R.T."/>
            <person name="Dodson R.J."/>
            <person name="Gwinn M.L."/>
            <person name="Haft D.H."/>
            <person name="Hickey E.K."/>
            <person name="Kolonay J.F."/>
            <person name="Nelson W.C."/>
            <person name="Umayam L.A."/>
            <person name="Ermolaeva M.D."/>
            <person name="Salzberg S.L."/>
            <person name="Delcher A."/>
            <person name="Utterback T.R."/>
            <person name="Weidman J.F."/>
            <person name="Khouri H.M."/>
            <person name="Gill J."/>
            <person name="Mikula A."/>
            <person name="Bishai W."/>
            <person name="Jacobs W.R. Jr."/>
            <person name="Venter J.C."/>
            <person name="Fraser C.M."/>
        </authorList>
    </citation>
    <scope>NUCLEOTIDE SEQUENCE [LARGE SCALE GENOMIC DNA]</scope>
    <source>
        <strain>CDC 1551 / Oshkosh</strain>
    </source>
</reference>
<evidence type="ECO:0000250" key="1"/>
<evidence type="ECO:0000255" key="2">
    <source>
        <dbReference type="PROSITE-ProRule" id="PRU01008"/>
    </source>
</evidence>
<evidence type="ECO:0000305" key="3"/>